<sequence>MRVAPMTSRFLDACRRRPTDVRPVWFMRQAGRYMKQYRQIREKHGILEICKRPDLAATVTLQPIEVLDVDAAIIFADLLLPIEPMGLKLKYEKGEGPVIGNPVRTSDDVDSLSTTNTDELGYVGEAIQHVVRALAGKVPVVGFVGAPFTMASYMIEGGASRNFVRTKKLMYSDETLWRRLMGKIVDVLAPFAHSQVAAGARAIQVFDSWVGALGSDDYVRFAAPYSRALIERIRSTGVPVIHFGTGASGFFRELHAAGGDVMGVDWRINIDQAWMDISYRSAIQGNLDPVALFAPLPELRTKVQELLKRTGTRPGHIFNLGHGILPETPVENVKAVVELVREFRP</sequence>
<feature type="chain" id="PRO_0000325696" description="Uroporphyrinogen decarboxylase">
    <location>
        <begin position="1"/>
        <end position="345"/>
    </location>
</feature>
<feature type="binding site" evidence="1">
    <location>
        <begin position="28"/>
        <end position="32"/>
    </location>
    <ligand>
        <name>substrate</name>
    </ligand>
</feature>
<feature type="binding site" evidence="1">
    <location>
        <position position="77"/>
    </location>
    <ligand>
        <name>substrate</name>
    </ligand>
</feature>
<feature type="binding site" evidence="1">
    <location>
        <position position="153"/>
    </location>
    <ligand>
        <name>substrate</name>
    </ligand>
</feature>
<feature type="binding site" evidence="1">
    <location>
        <position position="208"/>
    </location>
    <ligand>
        <name>substrate</name>
    </ligand>
</feature>
<feature type="binding site" evidence="1">
    <location>
        <position position="322"/>
    </location>
    <ligand>
        <name>substrate</name>
    </ligand>
</feature>
<feature type="site" description="Transition state stabilizer" evidence="1">
    <location>
        <position position="77"/>
    </location>
</feature>
<organism>
    <name type="scientific">Solibacter usitatus (strain Ellin6076)</name>
    <dbReference type="NCBI Taxonomy" id="234267"/>
    <lineage>
        <taxon>Bacteria</taxon>
        <taxon>Pseudomonadati</taxon>
        <taxon>Acidobacteriota</taxon>
        <taxon>Terriglobia</taxon>
        <taxon>Bryobacterales</taxon>
        <taxon>Solibacteraceae</taxon>
        <taxon>Candidatus Solibacter</taxon>
    </lineage>
</organism>
<name>DCUP_SOLUE</name>
<accession>Q01W10</accession>
<evidence type="ECO:0000255" key="1">
    <source>
        <dbReference type="HAMAP-Rule" id="MF_00218"/>
    </source>
</evidence>
<comment type="function">
    <text evidence="1">Catalyzes the decarboxylation of four acetate groups of uroporphyrinogen-III to yield coproporphyrinogen-III.</text>
</comment>
<comment type="catalytic activity">
    <reaction evidence="1">
        <text>uroporphyrinogen III + 4 H(+) = coproporphyrinogen III + 4 CO2</text>
        <dbReference type="Rhea" id="RHEA:19865"/>
        <dbReference type="ChEBI" id="CHEBI:15378"/>
        <dbReference type="ChEBI" id="CHEBI:16526"/>
        <dbReference type="ChEBI" id="CHEBI:57308"/>
        <dbReference type="ChEBI" id="CHEBI:57309"/>
        <dbReference type="EC" id="4.1.1.37"/>
    </reaction>
</comment>
<comment type="pathway">
    <text evidence="1">Porphyrin-containing compound metabolism; protoporphyrin-IX biosynthesis; coproporphyrinogen-III from 5-aminolevulinate: step 4/4.</text>
</comment>
<comment type="subunit">
    <text evidence="1">Homodimer.</text>
</comment>
<comment type="subcellular location">
    <subcellularLocation>
        <location evidence="1">Cytoplasm</location>
    </subcellularLocation>
</comment>
<comment type="similarity">
    <text evidence="1">Belongs to the uroporphyrinogen decarboxylase family.</text>
</comment>
<reference key="1">
    <citation type="journal article" date="2009" name="Appl. Environ. Microbiol.">
        <title>Three genomes from the phylum Acidobacteria provide insight into the lifestyles of these microorganisms in soils.</title>
        <authorList>
            <person name="Ward N.L."/>
            <person name="Challacombe J.F."/>
            <person name="Janssen P.H."/>
            <person name="Henrissat B."/>
            <person name="Coutinho P.M."/>
            <person name="Wu M."/>
            <person name="Xie G."/>
            <person name="Haft D.H."/>
            <person name="Sait M."/>
            <person name="Badger J."/>
            <person name="Barabote R.D."/>
            <person name="Bradley B."/>
            <person name="Brettin T.S."/>
            <person name="Brinkac L.M."/>
            <person name="Bruce D."/>
            <person name="Creasy T."/>
            <person name="Daugherty S.C."/>
            <person name="Davidsen T.M."/>
            <person name="DeBoy R.T."/>
            <person name="Detter J.C."/>
            <person name="Dodson R.J."/>
            <person name="Durkin A.S."/>
            <person name="Ganapathy A."/>
            <person name="Gwinn-Giglio M."/>
            <person name="Han C.S."/>
            <person name="Khouri H."/>
            <person name="Kiss H."/>
            <person name="Kothari S.P."/>
            <person name="Madupu R."/>
            <person name="Nelson K.E."/>
            <person name="Nelson W.C."/>
            <person name="Paulsen I."/>
            <person name="Penn K."/>
            <person name="Ren Q."/>
            <person name="Rosovitz M.J."/>
            <person name="Selengut J.D."/>
            <person name="Shrivastava S."/>
            <person name="Sullivan S.A."/>
            <person name="Tapia R."/>
            <person name="Thompson L.S."/>
            <person name="Watkins K.L."/>
            <person name="Yang Q."/>
            <person name="Yu C."/>
            <person name="Zafar N."/>
            <person name="Zhou L."/>
            <person name="Kuske C.R."/>
        </authorList>
    </citation>
    <scope>NUCLEOTIDE SEQUENCE [LARGE SCALE GENOMIC DNA]</scope>
    <source>
        <strain>Ellin6076</strain>
    </source>
</reference>
<proteinExistence type="inferred from homology"/>
<keyword id="KW-0963">Cytoplasm</keyword>
<keyword id="KW-0210">Decarboxylase</keyword>
<keyword id="KW-0456">Lyase</keyword>
<keyword id="KW-0627">Porphyrin biosynthesis</keyword>
<dbReference type="EC" id="4.1.1.37" evidence="1"/>
<dbReference type="EMBL" id="CP000473">
    <property type="protein sequence ID" value="ABJ86155.1"/>
    <property type="molecule type" value="Genomic_DNA"/>
</dbReference>
<dbReference type="SMR" id="Q01W10"/>
<dbReference type="FunCoup" id="Q01W10">
    <property type="interactions" value="596"/>
</dbReference>
<dbReference type="STRING" id="234267.Acid_5202"/>
<dbReference type="KEGG" id="sus:Acid_5202"/>
<dbReference type="eggNOG" id="COG0407">
    <property type="taxonomic scope" value="Bacteria"/>
</dbReference>
<dbReference type="HOGENOM" id="CLU_040933_0_1_0"/>
<dbReference type="InParanoid" id="Q01W10"/>
<dbReference type="OrthoDB" id="9806656at2"/>
<dbReference type="UniPathway" id="UPA00251">
    <property type="reaction ID" value="UER00321"/>
</dbReference>
<dbReference type="GO" id="GO:0005829">
    <property type="term" value="C:cytosol"/>
    <property type="evidence" value="ECO:0007669"/>
    <property type="project" value="TreeGrafter"/>
</dbReference>
<dbReference type="GO" id="GO:0004853">
    <property type="term" value="F:uroporphyrinogen decarboxylase activity"/>
    <property type="evidence" value="ECO:0007669"/>
    <property type="project" value="UniProtKB-UniRule"/>
</dbReference>
<dbReference type="GO" id="GO:0006782">
    <property type="term" value="P:protoporphyrinogen IX biosynthetic process"/>
    <property type="evidence" value="ECO:0007669"/>
    <property type="project" value="UniProtKB-UniRule"/>
</dbReference>
<dbReference type="CDD" id="cd00717">
    <property type="entry name" value="URO-D"/>
    <property type="match status" value="1"/>
</dbReference>
<dbReference type="Gene3D" id="3.20.20.210">
    <property type="match status" value="1"/>
</dbReference>
<dbReference type="HAMAP" id="MF_00218">
    <property type="entry name" value="URO_D"/>
    <property type="match status" value="1"/>
</dbReference>
<dbReference type="InterPro" id="IPR038071">
    <property type="entry name" value="UROD/MetE-like_sf"/>
</dbReference>
<dbReference type="InterPro" id="IPR006361">
    <property type="entry name" value="Uroporphyrinogen_deCO2ase_HemE"/>
</dbReference>
<dbReference type="InterPro" id="IPR000257">
    <property type="entry name" value="Uroporphyrinogen_deCOase"/>
</dbReference>
<dbReference type="NCBIfam" id="TIGR01464">
    <property type="entry name" value="hemE"/>
    <property type="match status" value="1"/>
</dbReference>
<dbReference type="PANTHER" id="PTHR21091">
    <property type="entry name" value="METHYLTETRAHYDROFOLATE:HOMOCYSTEINE METHYLTRANSFERASE RELATED"/>
    <property type="match status" value="1"/>
</dbReference>
<dbReference type="PANTHER" id="PTHR21091:SF169">
    <property type="entry name" value="UROPORPHYRINOGEN DECARBOXYLASE"/>
    <property type="match status" value="1"/>
</dbReference>
<dbReference type="Pfam" id="PF01208">
    <property type="entry name" value="URO-D"/>
    <property type="match status" value="1"/>
</dbReference>
<dbReference type="SUPFAM" id="SSF51726">
    <property type="entry name" value="UROD/MetE-like"/>
    <property type="match status" value="1"/>
</dbReference>
<dbReference type="PROSITE" id="PS00906">
    <property type="entry name" value="UROD_1"/>
    <property type="match status" value="1"/>
</dbReference>
<protein>
    <recommendedName>
        <fullName evidence="1">Uroporphyrinogen decarboxylase</fullName>
        <shortName evidence="1">UPD</shortName>
        <shortName evidence="1">URO-D</shortName>
        <ecNumber evidence="1">4.1.1.37</ecNumber>
    </recommendedName>
</protein>
<gene>
    <name evidence="1" type="primary">hemE</name>
    <name type="ordered locus">Acid_5202</name>
</gene>